<accession>O28853</accession>
<proteinExistence type="inferred from homology"/>
<name>KPRS2_ARCFU</name>
<keyword id="KW-0067">ATP-binding</keyword>
<keyword id="KW-0963">Cytoplasm</keyword>
<keyword id="KW-0418">Kinase</keyword>
<keyword id="KW-0460">Magnesium</keyword>
<keyword id="KW-0479">Metal-binding</keyword>
<keyword id="KW-0545">Nucleotide biosynthesis</keyword>
<keyword id="KW-0547">Nucleotide-binding</keyword>
<keyword id="KW-1185">Reference proteome</keyword>
<keyword id="KW-0808">Transferase</keyword>
<reference key="1">
    <citation type="journal article" date="1997" name="Nature">
        <title>The complete genome sequence of the hyperthermophilic, sulphate-reducing archaeon Archaeoglobus fulgidus.</title>
        <authorList>
            <person name="Klenk H.-P."/>
            <person name="Clayton R.A."/>
            <person name="Tomb J.-F."/>
            <person name="White O."/>
            <person name="Nelson K.E."/>
            <person name="Ketchum K.A."/>
            <person name="Dodson R.J."/>
            <person name="Gwinn M.L."/>
            <person name="Hickey E.K."/>
            <person name="Peterson J.D."/>
            <person name="Richardson D.L."/>
            <person name="Kerlavage A.R."/>
            <person name="Graham D.E."/>
            <person name="Kyrpides N.C."/>
            <person name="Fleischmann R.D."/>
            <person name="Quackenbush J."/>
            <person name="Lee N.H."/>
            <person name="Sutton G.G."/>
            <person name="Gill S.R."/>
            <person name="Kirkness E.F."/>
            <person name="Dougherty B.A."/>
            <person name="McKenney K."/>
            <person name="Adams M.D."/>
            <person name="Loftus B.J."/>
            <person name="Peterson S.N."/>
            <person name="Reich C.I."/>
            <person name="McNeil L.K."/>
            <person name="Badger J.H."/>
            <person name="Glodek A."/>
            <person name="Zhou L."/>
            <person name="Overbeek R."/>
            <person name="Gocayne J.D."/>
            <person name="Weidman J.F."/>
            <person name="McDonald L.A."/>
            <person name="Utterback T.R."/>
            <person name="Cotton M.D."/>
            <person name="Spriggs T."/>
            <person name="Artiach P."/>
            <person name="Kaine B.P."/>
            <person name="Sykes S.M."/>
            <person name="Sadow P.W."/>
            <person name="D'Andrea K.P."/>
            <person name="Bowman C."/>
            <person name="Fujii C."/>
            <person name="Garland S.A."/>
            <person name="Mason T.M."/>
            <person name="Olsen G.J."/>
            <person name="Fraser C.M."/>
            <person name="Smith H.O."/>
            <person name="Woese C.R."/>
            <person name="Venter J.C."/>
        </authorList>
    </citation>
    <scope>NUCLEOTIDE SEQUENCE [LARGE SCALE GENOMIC DNA]</scope>
    <source>
        <strain>ATCC 49558 / DSM 4304 / JCM 9628 / NBRC 100126 / VC-16</strain>
    </source>
</reference>
<protein>
    <recommendedName>
        <fullName evidence="1">Ribose-phosphate pyrophosphokinase 2</fullName>
        <shortName evidence="1">RPPK 2</shortName>
        <ecNumber evidence="1">2.7.6.1</ecNumber>
    </recommendedName>
    <alternativeName>
        <fullName evidence="1">5-phospho-D-ribosyl alpha-1-diphosphate synthase 2</fullName>
    </alternativeName>
    <alternativeName>
        <fullName evidence="1">Phosphoribosyl diphosphate synthase 2</fullName>
    </alternativeName>
    <alternativeName>
        <fullName evidence="1">Phosphoribosyl pyrophosphate synthase 2</fullName>
        <shortName evidence="1">P-Rib-PP synthase 2</shortName>
        <shortName evidence="1">PRPP synthase 2</shortName>
        <shortName evidence="1">PRPPase 2</shortName>
    </alternativeName>
</protein>
<organism>
    <name type="scientific">Archaeoglobus fulgidus (strain ATCC 49558 / DSM 4304 / JCM 9628 / NBRC 100126 / VC-16)</name>
    <dbReference type="NCBI Taxonomy" id="224325"/>
    <lineage>
        <taxon>Archaea</taxon>
        <taxon>Methanobacteriati</taxon>
        <taxon>Methanobacteriota</taxon>
        <taxon>Archaeoglobi</taxon>
        <taxon>Archaeoglobales</taxon>
        <taxon>Archaeoglobaceae</taxon>
        <taxon>Archaeoglobus</taxon>
    </lineage>
</organism>
<dbReference type="EC" id="2.7.6.1" evidence="1"/>
<dbReference type="EMBL" id="AE000782">
    <property type="protein sequence ID" value="AAB89836.1"/>
    <property type="molecule type" value="Genomic_DNA"/>
</dbReference>
<dbReference type="PIR" id="B69427">
    <property type="entry name" value="B69427"/>
</dbReference>
<dbReference type="RefSeq" id="WP_010878916.1">
    <property type="nucleotide sequence ID" value="NC_000917.1"/>
</dbReference>
<dbReference type="SMR" id="O28853"/>
<dbReference type="STRING" id="224325.AF_1419"/>
<dbReference type="PaxDb" id="224325-AF_1419"/>
<dbReference type="EnsemblBacteria" id="AAB89836">
    <property type="protein sequence ID" value="AAB89836"/>
    <property type="gene ID" value="AF_1419"/>
</dbReference>
<dbReference type="GeneID" id="1484643"/>
<dbReference type="KEGG" id="afu:AF_1419"/>
<dbReference type="eggNOG" id="arCOG00067">
    <property type="taxonomic scope" value="Archaea"/>
</dbReference>
<dbReference type="HOGENOM" id="CLU_033546_2_2_2"/>
<dbReference type="OrthoDB" id="371997at2157"/>
<dbReference type="PhylomeDB" id="O28853"/>
<dbReference type="UniPathway" id="UPA00087">
    <property type="reaction ID" value="UER00172"/>
</dbReference>
<dbReference type="Proteomes" id="UP000002199">
    <property type="component" value="Chromosome"/>
</dbReference>
<dbReference type="GO" id="GO:0005737">
    <property type="term" value="C:cytoplasm"/>
    <property type="evidence" value="ECO:0007669"/>
    <property type="project" value="UniProtKB-SubCell"/>
</dbReference>
<dbReference type="GO" id="GO:0002189">
    <property type="term" value="C:ribose phosphate diphosphokinase complex"/>
    <property type="evidence" value="ECO:0007669"/>
    <property type="project" value="TreeGrafter"/>
</dbReference>
<dbReference type="GO" id="GO:0005524">
    <property type="term" value="F:ATP binding"/>
    <property type="evidence" value="ECO:0007669"/>
    <property type="project" value="UniProtKB-KW"/>
</dbReference>
<dbReference type="GO" id="GO:0016301">
    <property type="term" value="F:kinase activity"/>
    <property type="evidence" value="ECO:0007669"/>
    <property type="project" value="UniProtKB-KW"/>
</dbReference>
<dbReference type="GO" id="GO:0000287">
    <property type="term" value="F:magnesium ion binding"/>
    <property type="evidence" value="ECO:0007669"/>
    <property type="project" value="UniProtKB-UniRule"/>
</dbReference>
<dbReference type="GO" id="GO:0004749">
    <property type="term" value="F:ribose phosphate diphosphokinase activity"/>
    <property type="evidence" value="ECO:0007669"/>
    <property type="project" value="UniProtKB-UniRule"/>
</dbReference>
<dbReference type="GO" id="GO:0006015">
    <property type="term" value="P:5-phosphoribose 1-diphosphate biosynthetic process"/>
    <property type="evidence" value="ECO:0007669"/>
    <property type="project" value="UniProtKB-UniRule"/>
</dbReference>
<dbReference type="GO" id="GO:0006164">
    <property type="term" value="P:purine nucleotide biosynthetic process"/>
    <property type="evidence" value="ECO:0007669"/>
    <property type="project" value="TreeGrafter"/>
</dbReference>
<dbReference type="CDD" id="cd06223">
    <property type="entry name" value="PRTases_typeI"/>
    <property type="match status" value="1"/>
</dbReference>
<dbReference type="Gene3D" id="3.40.50.2020">
    <property type="match status" value="2"/>
</dbReference>
<dbReference type="HAMAP" id="MF_00583_A">
    <property type="entry name" value="RibP_PPkinase_A"/>
    <property type="match status" value="1"/>
</dbReference>
<dbReference type="InterPro" id="IPR029099">
    <property type="entry name" value="Pribosyltran_N"/>
</dbReference>
<dbReference type="InterPro" id="IPR000836">
    <property type="entry name" value="PRibTrfase_dom"/>
</dbReference>
<dbReference type="InterPro" id="IPR029057">
    <property type="entry name" value="PRTase-like"/>
</dbReference>
<dbReference type="InterPro" id="IPR005946">
    <property type="entry name" value="Rib-P_diPkinase"/>
</dbReference>
<dbReference type="InterPro" id="IPR037514">
    <property type="entry name" value="Rib-P_diPkinase_arc"/>
</dbReference>
<dbReference type="NCBIfam" id="NF002095">
    <property type="entry name" value="PRK00934.1"/>
    <property type="match status" value="1"/>
</dbReference>
<dbReference type="NCBIfam" id="TIGR01251">
    <property type="entry name" value="ribP_PPkin"/>
    <property type="match status" value="1"/>
</dbReference>
<dbReference type="PANTHER" id="PTHR10210">
    <property type="entry name" value="RIBOSE-PHOSPHATE DIPHOSPHOKINASE FAMILY MEMBER"/>
    <property type="match status" value="1"/>
</dbReference>
<dbReference type="PANTHER" id="PTHR10210:SF32">
    <property type="entry name" value="RIBOSE-PHOSPHATE PYROPHOSPHOKINASE 2"/>
    <property type="match status" value="1"/>
</dbReference>
<dbReference type="Pfam" id="PF00156">
    <property type="entry name" value="Pribosyltran"/>
    <property type="match status" value="1"/>
</dbReference>
<dbReference type="Pfam" id="PF13793">
    <property type="entry name" value="Pribosyltran_N"/>
    <property type="match status" value="1"/>
</dbReference>
<dbReference type="SMART" id="SM01400">
    <property type="entry name" value="Pribosyltran_N"/>
    <property type="match status" value="1"/>
</dbReference>
<dbReference type="SUPFAM" id="SSF53271">
    <property type="entry name" value="PRTase-like"/>
    <property type="match status" value="1"/>
</dbReference>
<sequence length="271" mass="29059">MKIIPCPSSPLLARRVAEAAGIEIGGAVFKKFPDGELYVRVMEKEGVVVGSINSNEDLIALIFALDVLENAKAVVPYMGYARQDKVFQEGEAVSIKIVAEMLESRADEVVTVNIHSSDAASHFSKLKNLDAMPLVGEYFAGKDVVMISPDKGSMERVKTAAKHAGCEWDYMEKRRIDATTVEITPKTIDVEGRDVVIVDDIISTGGTVAEAARILYGLGAKSVSAACVHAVLAENAAIKLFNAGIKDIIATDTVECAFSRISVAELIAENI</sequence>
<comment type="function">
    <text evidence="1">Involved in the biosynthesis of the central metabolite phospho-alpha-D-ribosyl-1-pyrophosphate (PRPP) via the transfer of pyrophosphoryl group from ATP to 1-hydroxyl of ribose-5-phosphate (Rib-5-P).</text>
</comment>
<comment type="catalytic activity">
    <reaction evidence="1">
        <text>D-ribose 5-phosphate + ATP = 5-phospho-alpha-D-ribose 1-diphosphate + AMP + H(+)</text>
        <dbReference type="Rhea" id="RHEA:15609"/>
        <dbReference type="ChEBI" id="CHEBI:15378"/>
        <dbReference type="ChEBI" id="CHEBI:30616"/>
        <dbReference type="ChEBI" id="CHEBI:58017"/>
        <dbReference type="ChEBI" id="CHEBI:78346"/>
        <dbReference type="ChEBI" id="CHEBI:456215"/>
        <dbReference type="EC" id="2.7.6.1"/>
    </reaction>
</comment>
<comment type="cofactor">
    <cofactor evidence="1">
        <name>Mg(2+)</name>
        <dbReference type="ChEBI" id="CHEBI:18420"/>
    </cofactor>
    <text evidence="1">Binds 2 Mg(2+) ions per subunit.</text>
</comment>
<comment type="pathway">
    <text evidence="1">Metabolic intermediate biosynthesis; 5-phospho-alpha-D-ribose 1-diphosphate biosynthesis; 5-phospho-alpha-D-ribose 1-diphosphate from D-ribose 5-phosphate (route I): step 1/1.</text>
</comment>
<comment type="subcellular location">
    <subcellularLocation>
        <location evidence="1">Cytoplasm</location>
    </subcellularLocation>
</comment>
<comment type="similarity">
    <text evidence="1">Belongs to the ribose-phosphate pyrophosphokinase family. Class III (archaeal) subfamily.</text>
</comment>
<feature type="chain" id="PRO_0000141235" description="Ribose-phosphate pyrophosphokinase 2">
    <location>
        <begin position="1"/>
        <end position="271"/>
    </location>
</feature>
<feature type="active site" evidence="1">
    <location>
        <position position="173"/>
    </location>
</feature>
<feature type="binding site" evidence="1">
    <location>
        <begin position="34"/>
        <end position="36"/>
    </location>
    <ligand>
        <name>ATP</name>
        <dbReference type="ChEBI" id="CHEBI:30616"/>
    </ligand>
</feature>
<feature type="binding site" evidence="1">
    <location>
        <begin position="82"/>
        <end position="83"/>
    </location>
    <ligand>
        <name>ATP</name>
        <dbReference type="ChEBI" id="CHEBI:30616"/>
    </ligand>
</feature>
<feature type="binding site" evidence="1">
    <location>
        <position position="115"/>
    </location>
    <ligand>
        <name>Mg(2+)</name>
        <dbReference type="ChEBI" id="CHEBI:18420"/>
        <label>1</label>
    </ligand>
</feature>
<feature type="binding site" evidence="1">
    <location>
        <position position="150"/>
    </location>
    <ligand>
        <name>Mg(2+)</name>
        <dbReference type="ChEBI" id="CHEBI:18420"/>
        <label>2</label>
    </ligand>
</feature>
<feature type="binding site" evidence="1">
    <location>
        <position position="175"/>
    </location>
    <ligand>
        <name>D-ribose 5-phosphate</name>
        <dbReference type="ChEBI" id="CHEBI:78346"/>
    </ligand>
</feature>
<feature type="binding site" evidence="1">
    <location>
        <position position="199"/>
    </location>
    <ligand>
        <name>D-ribose 5-phosphate</name>
        <dbReference type="ChEBI" id="CHEBI:78346"/>
    </ligand>
</feature>
<feature type="binding site" evidence="1">
    <location>
        <begin position="203"/>
        <end position="207"/>
    </location>
    <ligand>
        <name>D-ribose 5-phosphate</name>
        <dbReference type="ChEBI" id="CHEBI:78346"/>
    </ligand>
</feature>
<gene>
    <name evidence="1" type="primary">prs2</name>
    <name type="synonym">prsA-2</name>
    <name type="ordered locus">AF_1419</name>
</gene>
<evidence type="ECO:0000255" key="1">
    <source>
        <dbReference type="HAMAP-Rule" id="MF_00583"/>
    </source>
</evidence>